<dbReference type="EMBL" id="X83529">
    <property type="protein sequence ID" value="CAA58510.1"/>
    <property type="molecule type" value="Genomic_DNA"/>
</dbReference>
<dbReference type="PIR" id="S51143">
    <property type="entry name" value="S51143"/>
</dbReference>
<dbReference type="SMR" id="Q46135"/>
<dbReference type="GO" id="GO:0042314">
    <property type="term" value="F:bacteriochlorophyll binding"/>
    <property type="evidence" value="ECO:0007669"/>
    <property type="project" value="UniProtKB-KW"/>
</dbReference>
<dbReference type="GO" id="GO:0046872">
    <property type="term" value="F:metal ion binding"/>
    <property type="evidence" value="ECO:0007669"/>
    <property type="project" value="UniProtKB-KW"/>
</dbReference>
<dbReference type="GO" id="GO:0015979">
    <property type="term" value="P:photosynthesis"/>
    <property type="evidence" value="ECO:0007669"/>
    <property type="project" value="UniProtKB-KW"/>
</dbReference>
<dbReference type="Gene3D" id="2.50.10.10">
    <property type="entry name" value="Bacteriochlorophyll A"/>
    <property type="match status" value="1"/>
</dbReference>
<dbReference type="InterPro" id="IPR003426">
    <property type="entry name" value="BChl_A"/>
</dbReference>
<dbReference type="InterPro" id="IPR036559">
    <property type="entry name" value="Chl_A_sf"/>
</dbReference>
<dbReference type="Pfam" id="PF02327">
    <property type="entry name" value="BChl_A"/>
    <property type="match status" value="1"/>
</dbReference>
<dbReference type="SUPFAM" id="SSF51081">
    <property type="entry name" value="Bacteriochlorophyll A protein"/>
    <property type="match status" value="1"/>
</dbReference>
<organism>
    <name type="scientific">Chlorobaculum thiosulfatiphilum</name>
    <name type="common">Chlorobium limicola f.sp. thiosulfatophilum</name>
    <dbReference type="NCBI Taxonomy" id="115852"/>
    <lineage>
        <taxon>Bacteria</taxon>
        <taxon>Pseudomonadati</taxon>
        <taxon>Chlorobiota</taxon>
        <taxon>Chlorobiia</taxon>
        <taxon>Chlorobiales</taxon>
        <taxon>Chlorobiaceae</taxon>
        <taxon>Chlorobaculum</taxon>
    </lineage>
</organism>
<protein>
    <recommendedName>
        <fullName>Bacteriochlorophyll a protein</fullName>
        <shortName>BCP</shortName>
        <shortName>BChl a protein</shortName>
    </recommendedName>
    <alternativeName>
        <fullName>Fenna-Matthews-Olson protein</fullName>
        <shortName>FMO protein</shortName>
    </alternativeName>
</protein>
<sequence>HRDYEIVLEGGSSSWGKVKARAKVNVPPASPLLPADCNVKLNVKPLDPAKGFVRISAVFESIVDSTKNKLTIEADIANETKERRISVGEGMVSVGGFSHSFSFEGSVVNMFYYRSDAVRRNVPNPIYRQGRQFHDILMKVPLDNNDLIDTWEGTVRAIGSTGTFNDWIRDFWFIGPAFTALNEGGQRISRIEVNGLNTESGPKGPVGVSRWRFSHGGSGMVDSISRWAELFPFDKLNRPAQVEAGFRSDSQGIEVKVDGEFPGVSVDAGGGLRRILNHPLIPLVHHGMVGKFNNFNVDAQLKVVLPKGYKVRYAAPQYRSQNLEEYRWSGGAYARWVEHVCKGGVGQFEVLYAQ</sequence>
<accession>Q46135</accession>
<proteinExistence type="predicted"/>
<feature type="chain" id="PRO_0000064891" description="Bacteriochlorophyll a protein">
    <location>
        <begin position="1" status="less than"/>
        <end position="354"/>
    </location>
</feature>
<feature type="binding site" description="axial binding residue" evidence="1">
    <location>
        <position position="99"/>
    </location>
    <ligand>
        <name>bacteriochlorophyll a</name>
        <dbReference type="ChEBI" id="CHEBI:61720"/>
        <label>1</label>
    </ligand>
    <ligandPart>
        <name>Mg</name>
        <dbReference type="ChEBI" id="CHEBI:25107"/>
    </ligandPart>
</feature>
<feature type="binding site" description="axial binding residue" evidence="1">
    <location>
        <position position="134"/>
    </location>
    <ligand>
        <name>bacteriochlorophyll a</name>
        <dbReference type="ChEBI" id="CHEBI:61720"/>
        <label>6</label>
    </ligand>
    <ligandPart>
        <name>Mg</name>
        <dbReference type="ChEBI" id="CHEBI:25107"/>
    </ligandPart>
</feature>
<feature type="binding site" description="axial binding residue" evidence="1">
    <location>
        <position position="278"/>
    </location>
    <ligand>
        <name>bacteriochlorophyll a</name>
        <dbReference type="ChEBI" id="CHEBI:61720"/>
        <label>4</label>
    </ligand>
    <ligandPart>
        <name>Mg</name>
        <dbReference type="ChEBI" id="CHEBI:25107"/>
    </ligandPart>
</feature>
<feature type="binding site" description="axial binding residue" evidence="1">
    <location>
        <position position="285"/>
    </location>
    <ligand>
        <name>bacteriochlorophyll a</name>
        <dbReference type="ChEBI" id="CHEBI:61720"/>
        <label>7</label>
    </ligand>
    <ligandPart>
        <name>Mg</name>
        <dbReference type="ChEBI" id="CHEBI:25107"/>
    </ligandPart>
</feature>
<feature type="binding site" description="axial binding residue" evidence="1">
    <location>
        <position position="286"/>
    </location>
    <ligand>
        <name>bacteriochlorophyll a</name>
        <dbReference type="ChEBI" id="CHEBI:61720"/>
        <label>3</label>
    </ligand>
    <ligandPart>
        <name>Mg</name>
        <dbReference type="ChEBI" id="CHEBI:25107"/>
    </ligandPart>
</feature>
<feature type="non-terminal residue">
    <location>
        <position position="1"/>
    </location>
</feature>
<keyword id="KW-0076">Bacteriochlorophyll</keyword>
<keyword id="KW-0148">Chlorophyll</keyword>
<keyword id="KW-0157">Chromophore</keyword>
<keyword id="KW-0249">Electron transport</keyword>
<keyword id="KW-0460">Magnesium</keyword>
<keyword id="KW-0479">Metal-binding</keyword>
<keyword id="KW-0602">Photosynthesis</keyword>
<keyword id="KW-0674">Reaction center</keyword>
<keyword id="KW-0813">Transport</keyword>
<evidence type="ECO:0000250" key="1"/>
<reference key="1">
    <citation type="journal article" date="1995" name="Biochemistry">
        <title>Stable photobleaching of P840 in Chlorobium reaction center preparations: presence of the 42-kDa bacteriochlorophyll a protein and a 17-kDa polypeptide.</title>
        <authorList>
            <person name="Hager-Braun C."/>
            <person name="Xie D.L."/>
            <person name="Jarosch U."/>
            <person name="Herold E."/>
            <person name="Buttner M."/>
            <person name="Zimmermann R."/>
            <person name="Deutzmann R."/>
            <person name="Hauska G."/>
            <person name="Nelson N."/>
        </authorList>
    </citation>
    <scope>NUCLEOTIDE SEQUENCE [GENOMIC DNA]</scope>
</reference>
<comment type="function">
    <text>Intermediary in the transfer of excitation energy from the chlorophyll to the reaction centers.</text>
</comment>
<comment type="subunit">
    <text>Homotrimer. Each subunit contains 7 molecules of bacteriochlorophyll a.</text>
</comment>
<gene>
    <name type="primary">fmoA</name>
</gene>
<name>BCPA_CHLTI</name>